<name>EF1D_RAT</name>
<sequence length="281" mass="31330">MATNFLMHEKIWFDKFKYDDAERRFYEQMNGPVTAGSRQENGASVILRDIARARENIQKSLAGSSGPGASSGPGGDHSDLIVRIASLEVENQNLRGVVQDLQQAISKLEVRLSTLEKSSPTHRATAPQTQHVSPMRQVEPPAKKGATPAEDDEDNDIDLFGSDEEEEDKEAARLREERLRQYAEKKAKKPTLVAKSSILLDVKPWDDETDMAQLETCVRSIQLDGLVWGASKLVPVGYGIRKLQIQCVVEDDKVGTDLLEEEITKFEEHVQSVDIAAFNKI</sequence>
<evidence type="ECO:0000250" key="1"/>
<evidence type="ECO:0000250" key="2">
    <source>
        <dbReference type="UniProtKB" id="P29692"/>
    </source>
</evidence>
<evidence type="ECO:0000250" key="3">
    <source>
        <dbReference type="UniProtKB" id="P57776"/>
    </source>
</evidence>
<evidence type="ECO:0000256" key="4">
    <source>
        <dbReference type="SAM" id="MobiDB-lite"/>
    </source>
</evidence>
<evidence type="ECO:0000303" key="5">
    <source>
    </source>
</evidence>
<evidence type="ECO:0000305" key="6"/>
<evidence type="ECO:0007744" key="7">
    <source>
    </source>
</evidence>
<evidence type="ECO:0007744" key="8">
    <source>
    </source>
</evidence>
<accession>Q68FR9</accession>
<gene>
    <name type="primary">Eef1d</name>
</gene>
<protein>
    <recommendedName>
        <fullName>Elongation factor 1-delta</fullName>
        <shortName>EF-1-delta</shortName>
    </recommendedName>
</protein>
<comment type="function">
    <molecule>Isoform 1</molecule>
    <text evidence="1">EF-1-beta and EF-1-delta stimulate the exchange of GDP bound to EF-1-alpha to GTP, regenerating EF-1-alpha for another round of transfer of aminoacyl-tRNAs to the ribosome.</text>
</comment>
<comment type="function">
    <molecule>Isoform 2</molecule>
    <text evidence="1">Regulates induction of heat-shock-responsive genes through association with heat shock transcription factors and direct DNA-binding at heat shock promoter elements (HSE).</text>
</comment>
<comment type="subunit">
    <text evidence="1">EF-1 is composed of 4 subunits: alpha, beta, delta isoform 1, and gamma. Isoform 2 interacts with HSF1 and NFE2L2 (By similarity).</text>
</comment>
<comment type="subcellular location">
    <molecule>Isoform 2</molecule>
    <subcellularLocation>
        <location evidence="1">Nucleus</location>
    </subcellularLocation>
</comment>
<comment type="alternative products">
    <event type="alternative splicing"/>
    <isoform>
        <id>Q68FR9-1</id>
        <name>1</name>
        <sequence type="displayed"/>
    </isoform>
    <isoform>
        <id>Q68FR9-2</id>
        <name>2</name>
        <name>eEF1BdeltaL</name>
        <sequence type="described" ref="VSP_037887"/>
    </isoform>
</comment>
<comment type="similarity">
    <text evidence="6">Belongs to the EF-1-beta/EF-1-delta family.</text>
</comment>
<feature type="initiator methionine" description="Removed" evidence="2">
    <location>
        <position position="1"/>
    </location>
</feature>
<feature type="chain" id="PRO_0000382456" description="Elongation factor 1-delta">
    <location>
        <begin position="2"/>
        <end position="281"/>
    </location>
</feature>
<feature type="region of interest" description="Leucine-zipper" evidence="1">
    <location>
        <begin position="80"/>
        <end position="115"/>
    </location>
</feature>
<feature type="region of interest" description="Disordered" evidence="4">
    <location>
        <begin position="115"/>
        <end position="172"/>
    </location>
</feature>
<feature type="region of interest" description="Catalytic (GEF)" evidence="1">
    <location>
        <begin position="173"/>
        <end position="281"/>
    </location>
</feature>
<feature type="compositionally biased region" description="Polar residues" evidence="4">
    <location>
        <begin position="115"/>
        <end position="132"/>
    </location>
</feature>
<feature type="compositionally biased region" description="Acidic residues" evidence="4">
    <location>
        <begin position="149"/>
        <end position="169"/>
    </location>
</feature>
<feature type="modified residue" description="N-acetylalanine" evidence="2">
    <location>
        <position position="2"/>
    </location>
</feature>
<feature type="modified residue" description="N6-acetyllysine" evidence="2">
    <location>
        <position position="17"/>
    </location>
</feature>
<feature type="modified residue" description="Phosphoserine" evidence="2">
    <location>
        <position position="37"/>
    </location>
</feature>
<feature type="modified residue" description="Phosphoserine" evidence="2">
    <location>
        <position position="44"/>
    </location>
</feature>
<feature type="modified residue" description="Phosphoserine" evidence="2">
    <location>
        <position position="60"/>
    </location>
</feature>
<feature type="modified residue" description="Phosphoserine" evidence="2">
    <location>
        <position position="86"/>
    </location>
</feature>
<feature type="modified residue" description="Phosphoserine" evidence="8">
    <location>
        <position position="106"/>
    </location>
</feature>
<feature type="modified residue" description="N6-acetyllysine" evidence="2">
    <location>
        <position position="107"/>
    </location>
</feature>
<feature type="modified residue" description="N6-acetyllysine; alternate" evidence="2">
    <location>
        <position position="117"/>
    </location>
</feature>
<feature type="modified residue" description="N6-succinyllysine; alternate" evidence="3">
    <location>
        <position position="117"/>
    </location>
</feature>
<feature type="modified residue" description="Phosphoserine" evidence="2">
    <location>
        <position position="119"/>
    </location>
</feature>
<feature type="modified residue" description="Phosphothreonine" evidence="2">
    <location>
        <position position="129"/>
    </location>
</feature>
<feature type="modified residue" description="Phosphoserine" evidence="8">
    <location>
        <position position="133"/>
    </location>
</feature>
<feature type="modified residue" description="Phosphothreonine" evidence="8">
    <location>
        <position position="147"/>
    </location>
</feature>
<feature type="modified residue" description="Phosphoserine; by CK2" evidence="7 8">
    <location>
        <position position="162"/>
    </location>
</feature>
<feature type="splice variant" id="VSP_037887" description="In isoform 2." evidence="5">
    <original>M</original>
    <variation>MRSGKASCALETVWEDKHKYEEAERRFHEHEATQAAAASVQQLLAEVPAVNGPSSQEDAEDTDEAETPNTSSRSDPRKSHECKKPLQKKRKRSPKSWLGQADLALVGLSADHVWLDKPLFDQAESSYRQRLADVAAQAAQSPALAPRGPCTHGSHVACHHVTWGIWVNKSCFDQAERAFVEWSQALLLAAEGSHREGTPDTGQQAVTPDLALACQPCPPANGQPPLGSLQALVREVWLEKPRYDAAERGFYEALFDGHPPGKVRLQERASQAEGTRRGRRDRRSRNTVGNKRAGSKRADGEAPSALPYWYFLHKDAEAPWLSKPTYDSAECRHHAAEALRIAWRLEAASLAHRPTPRSGPSMSSLRPKKM</variation>
    <location>
        <position position="1"/>
    </location>
</feature>
<organism>
    <name type="scientific">Rattus norvegicus</name>
    <name type="common">Rat</name>
    <dbReference type="NCBI Taxonomy" id="10116"/>
    <lineage>
        <taxon>Eukaryota</taxon>
        <taxon>Metazoa</taxon>
        <taxon>Chordata</taxon>
        <taxon>Craniata</taxon>
        <taxon>Vertebrata</taxon>
        <taxon>Euteleostomi</taxon>
        <taxon>Mammalia</taxon>
        <taxon>Eutheria</taxon>
        <taxon>Euarchontoglires</taxon>
        <taxon>Glires</taxon>
        <taxon>Rodentia</taxon>
        <taxon>Myomorpha</taxon>
        <taxon>Muroidea</taxon>
        <taxon>Muridae</taxon>
        <taxon>Murinae</taxon>
        <taxon>Rattus</taxon>
    </lineage>
</organism>
<reference key="1">
    <citation type="submission" date="2005-07" db="EMBL/GenBank/DDBJ databases">
        <authorList>
            <person name="Mural R.J."/>
            <person name="Adams M.D."/>
            <person name="Myers E.W."/>
            <person name="Smith H.O."/>
            <person name="Venter J.C."/>
        </authorList>
    </citation>
    <scope>NUCLEOTIDE SEQUENCE [LARGE SCALE GENOMIC DNA]</scope>
    <source>
        <strain>Brown Norway</strain>
    </source>
</reference>
<reference key="2">
    <citation type="journal article" date="2004" name="Genome Res.">
        <title>The status, quality, and expansion of the NIH full-length cDNA project: the Mammalian Gene Collection (MGC).</title>
        <authorList>
            <consortium name="The MGC Project Team"/>
        </authorList>
    </citation>
    <scope>NUCLEOTIDE SEQUENCE [LARGE SCALE MRNA] (ISOFORM 2)</scope>
    <source>
        <tissue>Testis</tissue>
    </source>
</reference>
<reference key="3">
    <citation type="journal article" date="2006" name="Proc. Natl. Acad. Sci. U.S.A.">
        <title>Quantitative phosphoproteomics of vasopressin-sensitive renal cells: regulation of aquaporin-2 phosphorylation at two sites.</title>
        <authorList>
            <person name="Hoffert J.D."/>
            <person name="Pisitkun T."/>
            <person name="Wang G."/>
            <person name="Shen R.-F."/>
            <person name="Knepper M.A."/>
        </authorList>
    </citation>
    <scope>PHOSPHORYLATION [LARGE SCALE ANALYSIS] AT SER-162</scope>
    <scope>IDENTIFICATION BY MASS SPECTROMETRY [LARGE SCALE ANALYSIS]</scope>
</reference>
<reference key="4">
    <citation type="journal article" date="2012" name="Nat. Commun.">
        <title>Quantitative maps of protein phosphorylation sites across 14 different rat organs and tissues.</title>
        <authorList>
            <person name="Lundby A."/>
            <person name="Secher A."/>
            <person name="Lage K."/>
            <person name="Nordsborg N.B."/>
            <person name="Dmytriyev A."/>
            <person name="Lundby C."/>
            <person name="Olsen J.V."/>
        </authorList>
    </citation>
    <scope>PHOSPHORYLATION [LARGE SCALE ANALYSIS] AT SER-106; SER-133; THR-147 AND SER-162</scope>
    <scope>IDENTIFICATION BY MASS SPECTROMETRY [LARGE SCALE ANALYSIS]</scope>
</reference>
<proteinExistence type="evidence at protein level"/>
<dbReference type="EMBL" id="CH473950">
    <property type="protein sequence ID" value="EDM16037.1"/>
    <property type="molecule type" value="Genomic_DNA"/>
</dbReference>
<dbReference type="EMBL" id="BC079391">
    <property type="protein sequence ID" value="AAH79391.1"/>
    <property type="molecule type" value="mRNA"/>
</dbReference>
<dbReference type="RefSeq" id="NP_001013122.1">
    <molecule id="Q68FR9-2"/>
    <property type="nucleotide sequence ID" value="NM_001013104.1"/>
</dbReference>
<dbReference type="RefSeq" id="XP_008763779.1">
    <molecule id="Q68FR9-1"/>
    <property type="nucleotide sequence ID" value="XM_008765557.3"/>
</dbReference>
<dbReference type="RefSeq" id="XP_008763780.1">
    <property type="nucleotide sequence ID" value="XM_008765558.1"/>
</dbReference>
<dbReference type="RefSeq" id="XP_008763781.1">
    <molecule id="Q68FR9-1"/>
    <property type="nucleotide sequence ID" value="XM_008765559.3"/>
</dbReference>
<dbReference type="RefSeq" id="XP_038934740.1">
    <molecule id="Q68FR9-2"/>
    <property type="nucleotide sequence ID" value="XM_039078812.2"/>
</dbReference>
<dbReference type="RefSeq" id="XP_063119368.1">
    <molecule id="Q68FR9-2"/>
    <property type="nucleotide sequence ID" value="XM_063263298.1"/>
</dbReference>
<dbReference type="RefSeq" id="XP_063119369.1">
    <molecule id="Q68FR9-2"/>
    <property type="nucleotide sequence ID" value="XM_063263299.1"/>
</dbReference>
<dbReference type="SMR" id="Q68FR9"/>
<dbReference type="BioGRID" id="256417">
    <property type="interactions" value="4"/>
</dbReference>
<dbReference type="FunCoup" id="Q68FR9">
    <property type="interactions" value="103"/>
</dbReference>
<dbReference type="IntAct" id="Q68FR9">
    <property type="interactions" value="2"/>
</dbReference>
<dbReference type="STRING" id="10116.ENSRNOP00000034828"/>
<dbReference type="iPTMnet" id="Q68FR9"/>
<dbReference type="PhosphoSitePlus" id="Q68FR9"/>
<dbReference type="jPOST" id="Q68FR9"/>
<dbReference type="PaxDb" id="10116-ENSRNOP00000034828"/>
<dbReference type="GeneID" id="300033"/>
<dbReference type="KEGG" id="rno:300033"/>
<dbReference type="UCSC" id="RGD:621174">
    <molecule id="Q68FR9-1"/>
    <property type="organism name" value="rat"/>
</dbReference>
<dbReference type="AGR" id="RGD:621174"/>
<dbReference type="CTD" id="1936"/>
<dbReference type="RGD" id="621174">
    <property type="gene designation" value="Eef1d"/>
</dbReference>
<dbReference type="VEuPathDB" id="HostDB:ENSRNOG00000021638"/>
<dbReference type="eggNOG" id="KOG1668">
    <property type="taxonomic scope" value="Eukaryota"/>
</dbReference>
<dbReference type="HOGENOM" id="CLU_020166_0_0_1"/>
<dbReference type="InParanoid" id="Q68FR9"/>
<dbReference type="PhylomeDB" id="Q68FR9"/>
<dbReference type="Reactome" id="R-RNO-156842">
    <property type="pathway name" value="Eukaryotic Translation Elongation"/>
</dbReference>
<dbReference type="PRO" id="PR:Q68FR9"/>
<dbReference type="Proteomes" id="UP000002494">
    <property type="component" value="Chromosome 7"/>
</dbReference>
<dbReference type="Proteomes" id="UP000234681">
    <property type="component" value="Chromosome 7"/>
</dbReference>
<dbReference type="Bgee" id="ENSRNOG00000021638">
    <property type="expression patterns" value="Expressed in testis and 20 other cell types or tissues"/>
</dbReference>
<dbReference type="GO" id="GO:0005737">
    <property type="term" value="C:cytoplasm"/>
    <property type="evidence" value="ECO:0000266"/>
    <property type="project" value="RGD"/>
</dbReference>
<dbReference type="GO" id="GO:0005829">
    <property type="term" value="C:cytosol"/>
    <property type="evidence" value="ECO:0000318"/>
    <property type="project" value="GO_Central"/>
</dbReference>
<dbReference type="GO" id="GO:0005783">
    <property type="term" value="C:endoplasmic reticulum"/>
    <property type="evidence" value="ECO:0000266"/>
    <property type="project" value="RGD"/>
</dbReference>
<dbReference type="GO" id="GO:0005853">
    <property type="term" value="C:eukaryotic translation elongation factor 1 complex"/>
    <property type="evidence" value="ECO:0007669"/>
    <property type="project" value="InterPro"/>
</dbReference>
<dbReference type="GO" id="GO:0098978">
    <property type="term" value="C:glutamatergic synapse"/>
    <property type="evidence" value="ECO:0000266"/>
    <property type="project" value="RGD"/>
</dbReference>
<dbReference type="GO" id="GO:0005634">
    <property type="term" value="C:nucleus"/>
    <property type="evidence" value="ECO:0000266"/>
    <property type="project" value="RGD"/>
</dbReference>
<dbReference type="GO" id="GO:0045202">
    <property type="term" value="C:synapse"/>
    <property type="evidence" value="ECO:0000266"/>
    <property type="project" value="RGD"/>
</dbReference>
<dbReference type="GO" id="GO:0003677">
    <property type="term" value="F:DNA binding"/>
    <property type="evidence" value="ECO:0007669"/>
    <property type="project" value="UniProtKB-KW"/>
</dbReference>
<dbReference type="GO" id="GO:0005085">
    <property type="term" value="F:guanyl-nucleotide exchange factor activity"/>
    <property type="evidence" value="ECO:0000318"/>
    <property type="project" value="GO_Central"/>
</dbReference>
<dbReference type="GO" id="GO:0003746">
    <property type="term" value="F:translation elongation factor activity"/>
    <property type="evidence" value="ECO:0007669"/>
    <property type="project" value="UniProtKB-KW"/>
</dbReference>
<dbReference type="GO" id="GO:0071479">
    <property type="term" value="P:cellular response to ionizing radiation"/>
    <property type="evidence" value="ECO:0000266"/>
    <property type="project" value="RGD"/>
</dbReference>
<dbReference type="GO" id="GO:0006414">
    <property type="term" value="P:translational elongation"/>
    <property type="evidence" value="ECO:0000318"/>
    <property type="project" value="GO_Central"/>
</dbReference>
<dbReference type="CDD" id="cd00292">
    <property type="entry name" value="EF1B"/>
    <property type="match status" value="1"/>
</dbReference>
<dbReference type="FunFam" id="3.30.70.60:FF:000001">
    <property type="entry name" value="Elongation factor 1-beta 1 like"/>
    <property type="match status" value="1"/>
</dbReference>
<dbReference type="Gene3D" id="3.30.70.60">
    <property type="match status" value="1"/>
</dbReference>
<dbReference type="InterPro" id="IPR036219">
    <property type="entry name" value="eEF-1beta-like_sf"/>
</dbReference>
<dbReference type="InterPro" id="IPR018940">
    <property type="entry name" value="EF-1_beta_acid_region_euk"/>
</dbReference>
<dbReference type="InterPro" id="IPR049720">
    <property type="entry name" value="EF1B_bsu/dsu"/>
</dbReference>
<dbReference type="InterPro" id="IPR014038">
    <property type="entry name" value="EF1B_bsu/dsu_GNE"/>
</dbReference>
<dbReference type="InterPro" id="IPR014717">
    <property type="entry name" value="Transl_elong_EF1B/ribsomal_bS6"/>
</dbReference>
<dbReference type="InterPro" id="IPR001326">
    <property type="entry name" value="Transl_elong_EF1B_B/D_CS"/>
</dbReference>
<dbReference type="PANTHER" id="PTHR11595">
    <property type="entry name" value="EF-HAND AND COILED-COIL DOMAIN-CONTAINING FAMILY MEMBER"/>
    <property type="match status" value="1"/>
</dbReference>
<dbReference type="PANTHER" id="PTHR11595:SF26">
    <property type="entry name" value="ELONGATION FACTOR 1-DELTA"/>
    <property type="match status" value="1"/>
</dbReference>
<dbReference type="Pfam" id="PF10587">
    <property type="entry name" value="EF-1_beta_acid"/>
    <property type="match status" value="1"/>
</dbReference>
<dbReference type="Pfam" id="PF00736">
    <property type="entry name" value="EF1_GNE"/>
    <property type="match status" value="1"/>
</dbReference>
<dbReference type="SMART" id="SM01182">
    <property type="entry name" value="EF-1_beta_acid"/>
    <property type="match status" value="1"/>
</dbReference>
<dbReference type="SMART" id="SM00888">
    <property type="entry name" value="EF1_GNE"/>
    <property type="match status" value="1"/>
</dbReference>
<dbReference type="SUPFAM" id="SSF54984">
    <property type="entry name" value="eEF-1beta-like"/>
    <property type="match status" value="1"/>
</dbReference>
<dbReference type="PROSITE" id="PS00825">
    <property type="entry name" value="EF1BD_2"/>
    <property type="match status" value="1"/>
</dbReference>
<keyword id="KW-0007">Acetylation</keyword>
<keyword id="KW-0025">Alternative splicing</keyword>
<keyword id="KW-0238">DNA-binding</keyword>
<keyword id="KW-0251">Elongation factor</keyword>
<keyword id="KW-0539">Nucleus</keyword>
<keyword id="KW-0597">Phosphoprotein</keyword>
<keyword id="KW-0648">Protein biosynthesis</keyword>
<keyword id="KW-1185">Reference proteome</keyword>
<keyword id="KW-0804">Transcription</keyword>
<keyword id="KW-0805">Transcription regulation</keyword>